<evidence type="ECO:0000255" key="1">
    <source>
        <dbReference type="HAMAP-Rule" id="MF_00712"/>
    </source>
</evidence>
<keyword id="KW-0560">Oxidoreductase</keyword>
<keyword id="KW-1185">Reference proteome</keyword>
<feature type="chain" id="PRO_1000147979" description="Probable glycine dehydrogenase (decarboxylating) subunit 1">
    <location>
        <begin position="1"/>
        <end position="450"/>
    </location>
</feature>
<accession>C0ZBW6</accession>
<protein>
    <recommendedName>
        <fullName evidence="1">Probable glycine dehydrogenase (decarboxylating) subunit 1</fullName>
        <ecNumber evidence="1">1.4.4.2</ecNumber>
    </recommendedName>
    <alternativeName>
        <fullName evidence="1">Glycine cleavage system P-protein subunit 1</fullName>
    </alternativeName>
    <alternativeName>
        <fullName evidence="1">Glycine decarboxylase subunit 1</fullName>
    </alternativeName>
    <alternativeName>
        <fullName evidence="1">Glycine dehydrogenase (aminomethyl-transferring) subunit 1</fullName>
    </alternativeName>
</protein>
<name>GCSPA_BREBN</name>
<organism>
    <name type="scientific">Brevibacillus brevis (strain 47 / JCM 6285 / NBRC 100599)</name>
    <dbReference type="NCBI Taxonomy" id="358681"/>
    <lineage>
        <taxon>Bacteria</taxon>
        <taxon>Bacillati</taxon>
        <taxon>Bacillota</taxon>
        <taxon>Bacilli</taxon>
        <taxon>Bacillales</taxon>
        <taxon>Paenibacillaceae</taxon>
        <taxon>Brevibacillus</taxon>
    </lineage>
</organism>
<sequence length="450" mass="48870">MKYRYLPQTDQDKREMLETLGISSVEELFADIPEEVRFKGALNIPEALSEPDLVKYFTHLANKNVNFSTHVNFLGAGVYQHYTPSTVNHMLLRGEFFTAYTPYQPEISQGELQAIFEFQTMVCELTGMEVANSSMYDGATSLAEAAMMAAGHTGKKRVIVSRAVHPEARGVLKTYAYGQNVELVEVGINSDGVTDTAALEALVDENTAAIIVQYPNFFGNVEDLGAIETIAHGKGALLITSSNPLALGVLEAPGKLGADIVVGDMQPFGIPASFGGPHCGYFATTTKLMRKMPGRIVGQTKDENGKRGFVLTLQAREQHIRREKATSNICSNQALLALAASIAMTALGKQGVQEMAMMNLQKAHYAKNALQAKGLEIVFTSPFFNEFVVKLNKPVAEVNKGLLAAGIIGGYDLGLDYPEFANHTLLAVTELRTKEEIDILAAELEAITRA</sequence>
<gene>
    <name evidence="1" type="primary">gcvPA</name>
    <name type="ordered locus">BBR47_22980</name>
</gene>
<comment type="function">
    <text evidence="1">The glycine cleavage system catalyzes the degradation of glycine. The P protein binds the alpha-amino group of glycine through its pyridoxal phosphate cofactor; CO(2) is released and the remaining methylamine moiety is then transferred to the lipoamide cofactor of the H protein.</text>
</comment>
<comment type="catalytic activity">
    <reaction evidence="1">
        <text>N(6)-[(R)-lipoyl]-L-lysyl-[glycine-cleavage complex H protein] + glycine + H(+) = N(6)-[(R)-S(8)-aminomethyldihydrolipoyl]-L-lysyl-[glycine-cleavage complex H protein] + CO2</text>
        <dbReference type="Rhea" id="RHEA:24304"/>
        <dbReference type="Rhea" id="RHEA-COMP:10494"/>
        <dbReference type="Rhea" id="RHEA-COMP:10495"/>
        <dbReference type="ChEBI" id="CHEBI:15378"/>
        <dbReference type="ChEBI" id="CHEBI:16526"/>
        <dbReference type="ChEBI" id="CHEBI:57305"/>
        <dbReference type="ChEBI" id="CHEBI:83099"/>
        <dbReference type="ChEBI" id="CHEBI:83143"/>
        <dbReference type="EC" id="1.4.4.2"/>
    </reaction>
</comment>
<comment type="subunit">
    <text evidence="1">The glycine cleavage system is composed of four proteins: P, T, L and H. In this organism, the P 'protein' is a heterodimer of two subunits.</text>
</comment>
<comment type="similarity">
    <text evidence="1">Belongs to the GcvP family. N-terminal subunit subfamily.</text>
</comment>
<proteinExistence type="inferred from homology"/>
<reference key="1">
    <citation type="submission" date="2005-03" db="EMBL/GenBank/DDBJ databases">
        <title>Brevibacillus brevis strain 47, complete genome.</title>
        <authorList>
            <person name="Hosoyama A."/>
            <person name="Yamada R."/>
            <person name="Hongo Y."/>
            <person name="Terui Y."/>
            <person name="Ankai A."/>
            <person name="Masuyama W."/>
            <person name="Sekiguchi M."/>
            <person name="Takeda T."/>
            <person name="Asano K."/>
            <person name="Ohji S."/>
            <person name="Ichikawa N."/>
            <person name="Narita S."/>
            <person name="Aoki N."/>
            <person name="Miura H."/>
            <person name="Matsushita S."/>
            <person name="Sekigawa T."/>
            <person name="Yamagata H."/>
            <person name="Yoshikawa H."/>
            <person name="Udaka S."/>
            <person name="Tanikawa S."/>
            <person name="Fujita N."/>
        </authorList>
    </citation>
    <scope>NUCLEOTIDE SEQUENCE [LARGE SCALE GENOMIC DNA]</scope>
    <source>
        <strain>47 / JCM 6285 / NBRC 100599</strain>
    </source>
</reference>
<dbReference type="EC" id="1.4.4.2" evidence="1"/>
<dbReference type="EMBL" id="AP008955">
    <property type="protein sequence ID" value="BAH43275.1"/>
    <property type="molecule type" value="Genomic_DNA"/>
</dbReference>
<dbReference type="RefSeq" id="WP_012685996.1">
    <property type="nucleotide sequence ID" value="NC_012491.1"/>
</dbReference>
<dbReference type="SMR" id="C0ZBW6"/>
<dbReference type="STRING" id="358681.BBR47_22980"/>
<dbReference type="KEGG" id="bbe:BBR47_22980"/>
<dbReference type="eggNOG" id="COG0403">
    <property type="taxonomic scope" value="Bacteria"/>
</dbReference>
<dbReference type="HOGENOM" id="CLU_004620_0_2_9"/>
<dbReference type="Proteomes" id="UP000001877">
    <property type="component" value="Chromosome"/>
</dbReference>
<dbReference type="GO" id="GO:0004375">
    <property type="term" value="F:glycine dehydrogenase (decarboxylating) activity"/>
    <property type="evidence" value="ECO:0007669"/>
    <property type="project" value="UniProtKB-EC"/>
</dbReference>
<dbReference type="GO" id="GO:0019464">
    <property type="term" value="P:glycine decarboxylation via glycine cleavage system"/>
    <property type="evidence" value="ECO:0007669"/>
    <property type="project" value="UniProtKB-UniRule"/>
</dbReference>
<dbReference type="GO" id="GO:0009116">
    <property type="term" value="P:nucleoside metabolic process"/>
    <property type="evidence" value="ECO:0007669"/>
    <property type="project" value="InterPro"/>
</dbReference>
<dbReference type="CDD" id="cd00613">
    <property type="entry name" value="GDC-P"/>
    <property type="match status" value="1"/>
</dbReference>
<dbReference type="Gene3D" id="3.90.1150.10">
    <property type="entry name" value="Aspartate Aminotransferase, domain 1"/>
    <property type="match status" value="1"/>
</dbReference>
<dbReference type="Gene3D" id="3.40.640.10">
    <property type="entry name" value="Type I PLP-dependent aspartate aminotransferase-like (Major domain)"/>
    <property type="match status" value="1"/>
</dbReference>
<dbReference type="HAMAP" id="MF_00712">
    <property type="entry name" value="GcvPA"/>
    <property type="match status" value="1"/>
</dbReference>
<dbReference type="InterPro" id="IPR023010">
    <property type="entry name" value="GcvPA"/>
</dbReference>
<dbReference type="InterPro" id="IPR049315">
    <property type="entry name" value="GDC-P_N"/>
</dbReference>
<dbReference type="InterPro" id="IPR020581">
    <property type="entry name" value="GDC_P"/>
</dbReference>
<dbReference type="InterPro" id="IPR015424">
    <property type="entry name" value="PyrdxlP-dep_Trfase"/>
</dbReference>
<dbReference type="InterPro" id="IPR015421">
    <property type="entry name" value="PyrdxlP-dep_Trfase_major"/>
</dbReference>
<dbReference type="InterPro" id="IPR015422">
    <property type="entry name" value="PyrdxlP-dep_Trfase_small"/>
</dbReference>
<dbReference type="NCBIfam" id="NF001696">
    <property type="entry name" value="PRK00451.1"/>
    <property type="match status" value="1"/>
</dbReference>
<dbReference type="PANTHER" id="PTHR42806">
    <property type="entry name" value="GLYCINE CLEAVAGE SYSTEM P-PROTEIN"/>
    <property type="match status" value="1"/>
</dbReference>
<dbReference type="PANTHER" id="PTHR42806:SF1">
    <property type="entry name" value="GLYCINE DEHYDROGENASE (DECARBOXYLATING)"/>
    <property type="match status" value="1"/>
</dbReference>
<dbReference type="Pfam" id="PF02347">
    <property type="entry name" value="GDC-P"/>
    <property type="match status" value="1"/>
</dbReference>
<dbReference type="PIRSF" id="PIRSF006815">
    <property type="entry name" value="GcvPA"/>
    <property type="match status" value="1"/>
</dbReference>
<dbReference type="SUPFAM" id="SSF53383">
    <property type="entry name" value="PLP-dependent transferases"/>
    <property type="match status" value="1"/>
</dbReference>